<feature type="chain" id="PRO_0000412474" description="Malonyl-[acyl-carrier protein] O-methyltransferase">
    <location>
        <begin position="1"/>
        <end position="255"/>
    </location>
</feature>
<comment type="function">
    <text evidence="1">Converts the free carboxyl group of a malonyl-thioester to its methyl ester by transfer of a methyl group from S-adenosyl-L-methionine (SAM). It allows to synthesize pimeloyl-ACP via the fatty acid synthetic pathway.</text>
</comment>
<comment type="catalytic activity">
    <reaction evidence="1">
        <text>malonyl-[ACP] + S-adenosyl-L-methionine = malonyl-[ACP] methyl ester + S-adenosyl-L-homocysteine</text>
        <dbReference type="Rhea" id="RHEA:17105"/>
        <dbReference type="Rhea" id="RHEA-COMP:9623"/>
        <dbReference type="Rhea" id="RHEA-COMP:9954"/>
        <dbReference type="ChEBI" id="CHEBI:57856"/>
        <dbReference type="ChEBI" id="CHEBI:59789"/>
        <dbReference type="ChEBI" id="CHEBI:78449"/>
        <dbReference type="ChEBI" id="CHEBI:78845"/>
        <dbReference type="EC" id="2.1.1.197"/>
    </reaction>
</comment>
<comment type="pathway">
    <text evidence="1">Cofactor biosynthesis; biotin biosynthesis.</text>
</comment>
<comment type="similarity">
    <text evidence="1">Belongs to the methyltransferase superfamily.</text>
</comment>
<proteinExistence type="inferred from homology"/>
<keyword id="KW-0093">Biotin biosynthesis</keyword>
<keyword id="KW-0489">Methyltransferase</keyword>
<keyword id="KW-0949">S-adenosyl-L-methionine</keyword>
<keyword id="KW-0808">Transferase</keyword>
<name>BIOC_ACIAD</name>
<sequence length="255" mass="29425">MFVNLNKSLIAQRFAKARQSYVENAIAQKKISHHLCHLMQAYCPLHLSRIFEIGCGSGNLTQELFVSFQIQRAYLNDLYDEVKQHFLDEQPIEWCIGDIESLSLPEHLNAIVSSSAIQWVQNLPQLLGRCHHALNDQGWLCLSTFGSDNFKEIKQLTGQGLSYWSVQDWQVHLQASGFELMKIEQQQLKMQFDSPRAILKHLKATGVTGTVATTQPHWNKQSLAQFYHDYCQFQTDDGHYELTYHPIYIIARRTS</sequence>
<dbReference type="EC" id="2.1.1.197" evidence="1"/>
<dbReference type="EMBL" id="CR543861">
    <property type="protein sequence ID" value="CAG67758.1"/>
    <property type="molecule type" value="Genomic_DNA"/>
</dbReference>
<dbReference type="SMR" id="Q6FDV0"/>
<dbReference type="STRING" id="202950.GCA_001485005_02608"/>
<dbReference type="KEGG" id="aci:ACIAD0858"/>
<dbReference type="eggNOG" id="COG4106">
    <property type="taxonomic scope" value="Bacteria"/>
</dbReference>
<dbReference type="HOGENOM" id="CLU_046586_1_0_6"/>
<dbReference type="OrthoDB" id="9760689at2"/>
<dbReference type="BioCyc" id="ASP62977:ACIAD_RS03960-MONOMER"/>
<dbReference type="UniPathway" id="UPA00078"/>
<dbReference type="Proteomes" id="UP000000430">
    <property type="component" value="Chromosome"/>
</dbReference>
<dbReference type="GO" id="GO:0010340">
    <property type="term" value="F:carboxyl-O-methyltransferase activity"/>
    <property type="evidence" value="ECO:0007669"/>
    <property type="project" value="UniProtKB-UniRule"/>
</dbReference>
<dbReference type="GO" id="GO:0102130">
    <property type="term" value="F:malonyl-CoA methyltransferase activity"/>
    <property type="evidence" value="ECO:0007669"/>
    <property type="project" value="UniProtKB-EC"/>
</dbReference>
<dbReference type="GO" id="GO:0009102">
    <property type="term" value="P:biotin biosynthetic process"/>
    <property type="evidence" value="ECO:0007669"/>
    <property type="project" value="UniProtKB-UniRule"/>
</dbReference>
<dbReference type="GO" id="GO:0032259">
    <property type="term" value="P:methylation"/>
    <property type="evidence" value="ECO:0007669"/>
    <property type="project" value="UniProtKB-KW"/>
</dbReference>
<dbReference type="CDD" id="cd02440">
    <property type="entry name" value="AdoMet_MTases"/>
    <property type="match status" value="1"/>
</dbReference>
<dbReference type="Gene3D" id="3.40.50.150">
    <property type="entry name" value="Vaccinia Virus protein VP39"/>
    <property type="match status" value="1"/>
</dbReference>
<dbReference type="HAMAP" id="MF_00835">
    <property type="entry name" value="BioC"/>
    <property type="match status" value="1"/>
</dbReference>
<dbReference type="InterPro" id="IPR011814">
    <property type="entry name" value="BioC"/>
</dbReference>
<dbReference type="InterPro" id="IPR050602">
    <property type="entry name" value="Malonyl-ACP_OMT"/>
</dbReference>
<dbReference type="InterPro" id="IPR029063">
    <property type="entry name" value="SAM-dependent_MTases_sf"/>
</dbReference>
<dbReference type="NCBIfam" id="TIGR02072">
    <property type="entry name" value="BioC"/>
    <property type="match status" value="1"/>
</dbReference>
<dbReference type="PANTHER" id="PTHR13090">
    <property type="entry name" value="ARGININE-HYDROXYLASE NDUFAF5, MITOCHONDRIAL"/>
    <property type="match status" value="1"/>
</dbReference>
<dbReference type="PANTHER" id="PTHR13090:SF1">
    <property type="entry name" value="ARGININE-HYDROXYLASE NDUFAF5, MITOCHONDRIAL"/>
    <property type="match status" value="1"/>
</dbReference>
<dbReference type="Pfam" id="PF13489">
    <property type="entry name" value="Methyltransf_23"/>
    <property type="match status" value="1"/>
</dbReference>
<dbReference type="SUPFAM" id="SSF53335">
    <property type="entry name" value="S-adenosyl-L-methionine-dependent methyltransferases"/>
    <property type="match status" value="1"/>
</dbReference>
<protein>
    <recommendedName>
        <fullName evidence="1">Malonyl-[acyl-carrier protein] O-methyltransferase</fullName>
        <shortName evidence="1">Malonyl-ACP O-methyltransferase</shortName>
        <ecNumber evidence="1">2.1.1.197</ecNumber>
    </recommendedName>
    <alternativeName>
        <fullName evidence="1">Biotin synthesis protein BioC</fullName>
    </alternativeName>
</protein>
<reference key="1">
    <citation type="journal article" date="2004" name="Nucleic Acids Res.">
        <title>Unique features revealed by the genome sequence of Acinetobacter sp. ADP1, a versatile and naturally transformation competent bacterium.</title>
        <authorList>
            <person name="Barbe V."/>
            <person name="Vallenet D."/>
            <person name="Fonknechten N."/>
            <person name="Kreimeyer A."/>
            <person name="Oztas S."/>
            <person name="Labarre L."/>
            <person name="Cruveiller S."/>
            <person name="Robert C."/>
            <person name="Duprat S."/>
            <person name="Wincker P."/>
            <person name="Ornston L.N."/>
            <person name="Weissenbach J."/>
            <person name="Marliere P."/>
            <person name="Cohen G.N."/>
            <person name="Medigue C."/>
        </authorList>
    </citation>
    <scope>NUCLEOTIDE SEQUENCE [LARGE SCALE GENOMIC DNA]</scope>
    <source>
        <strain>ATCC 33305 / BD413 / ADP1</strain>
    </source>
</reference>
<gene>
    <name evidence="1" type="primary">bioC</name>
    <name type="ordered locus">ACIAD0858</name>
</gene>
<organism>
    <name type="scientific">Acinetobacter baylyi (strain ATCC 33305 / BD413 / ADP1)</name>
    <dbReference type="NCBI Taxonomy" id="62977"/>
    <lineage>
        <taxon>Bacteria</taxon>
        <taxon>Pseudomonadati</taxon>
        <taxon>Pseudomonadota</taxon>
        <taxon>Gammaproteobacteria</taxon>
        <taxon>Moraxellales</taxon>
        <taxon>Moraxellaceae</taxon>
        <taxon>Acinetobacter</taxon>
    </lineage>
</organism>
<accession>Q6FDV0</accession>
<evidence type="ECO:0000255" key="1">
    <source>
        <dbReference type="HAMAP-Rule" id="MF_00835"/>
    </source>
</evidence>